<gene>
    <name type="ordered locus">MGAS10750_Spy1638</name>
</gene>
<keyword id="KW-0963">Cytoplasm</keyword>
<keyword id="KW-0238">DNA-binding</keyword>
<dbReference type="EMBL" id="CP000262">
    <property type="protein sequence ID" value="ABF38588.1"/>
    <property type="molecule type" value="Genomic_DNA"/>
</dbReference>
<dbReference type="SMR" id="Q1J4Z8"/>
<dbReference type="KEGG" id="spi:MGAS10750_Spy1638"/>
<dbReference type="HOGENOM" id="CLU_140930_1_1_9"/>
<dbReference type="Proteomes" id="UP000002434">
    <property type="component" value="Chromosome"/>
</dbReference>
<dbReference type="GO" id="GO:0043590">
    <property type="term" value="C:bacterial nucleoid"/>
    <property type="evidence" value="ECO:0007669"/>
    <property type="project" value="UniProtKB-UniRule"/>
</dbReference>
<dbReference type="GO" id="GO:0005829">
    <property type="term" value="C:cytosol"/>
    <property type="evidence" value="ECO:0007669"/>
    <property type="project" value="TreeGrafter"/>
</dbReference>
<dbReference type="GO" id="GO:0003677">
    <property type="term" value="F:DNA binding"/>
    <property type="evidence" value="ECO:0007669"/>
    <property type="project" value="UniProtKB-UniRule"/>
</dbReference>
<dbReference type="Gene3D" id="3.30.1310.10">
    <property type="entry name" value="Nucleoid-associated protein YbaB-like domain"/>
    <property type="match status" value="1"/>
</dbReference>
<dbReference type="HAMAP" id="MF_00274">
    <property type="entry name" value="DNA_YbaB_EbfC"/>
    <property type="match status" value="1"/>
</dbReference>
<dbReference type="InterPro" id="IPR036894">
    <property type="entry name" value="YbaB-like_sf"/>
</dbReference>
<dbReference type="InterPro" id="IPR004401">
    <property type="entry name" value="YbaB/EbfC"/>
</dbReference>
<dbReference type="NCBIfam" id="TIGR00103">
    <property type="entry name" value="DNA_YbaB_EbfC"/>
    <property type="match status" value="1"/>
</dbReference>
<dbReference type="PANTHER" id="PTHR33449">
    <property type="entry name" value="NUCLEOID-ASSOCIATED PROTEIN YBAB"/>
    <property type="match status" value="1"/>
</dbReference>
<dbReference type="PANTHER" id="PTHR33449:SF1">
    <property type="entry name" value="NUCLEOID-ASSOCIATED PROTEIN YBAB"/>
    <property type="match status" value="1"/>
</dbReference>
<dbReference type="Pfam" id="PF02575">
    <property type="entry name" value="YbaB_DNA_bd"/>
    <property type="match status" value="1"/>
</dbReference>
<dbReference type="PIRSF" id="PIRSF004555">
    <property type="entry name" value="UCP004555"/>
    <property type="match status" value="1"/>
</dbReference>
<dbReference type="SUPFAM" id="SSF82607">
    <property type="entry name" value="YbaB-like"/>
    <property type="match status" value="1"/>
</dbReference>
<sequence length="99" mass="10976">MMNMQNMMKQAQKLQKQMEQKQADLAAMQFTGKSAQDLVTATFTGDKKLVGIDFKEAVVDPEDVETLQDMTTQAINDALTQIDETTKKTLGAFAGKLPF</sequence>
<protein>
    <recommendedName>
        <fullName evidence="1">Nucleoid-associated protein MGAS10750_Spy1638</fullName>
    </recommendedName>
</protein>
<name>Y1638_STRPF</name>
<proteinExistence type="inferred from homology"/>
<reference key="1">
    <citation type="journal article" date="2006" name="Proc. Natl. Acad. Sci. U.S.A.">
        <title>Molecular genetic anatomy of inter- and intraserotype variation in the human bacterial pathogen group A Streptococcus.</title>
        <authorList>
            <person name="Beres S.B."/>
            <person name="Richter E.W."/>
            <person name="Nagiec M.J."/>
            <person name="Sumby P."/>
            <person name="Porcella S.F."/>
            <person name="DeLeo F.R."/>
            <person name="Musser J.M."/>
        </authorList>
    </citation>
    <scope>NUCLEOTIDE SEQUENCE [LARGE SCALE GENOMIC DNA]</scope>
    <source>
        <strain>MGAS10750</strain>
    </source>
</reference>
<comment type="function">
    <text evidence="1">Binds to DNA and alters its conformation. May be involved in regulation of gene expression, nucleoid organization and DNA protection.</text>
</comment>
<comment type="subunit">
    <text evidence="1">Homodimer.</text>
</comment>
<comment type="subcellular location">
    <subcellularLocation>
        <location evidence="1">Cytoplasm</location>
        <location evidence="1">Nucleoid</location>
    </subcellularLocation>
</comment>
<comment type="similarity">
    <text evidence="1">Belongs to the YbaB/EbfC family.</text>
</comment>
<feature type="chain" id="PRO_1000003841" description="Nucleoid-associated protein MGAS10750_Spy1638">
    <location>
        <begin position="1"/>
        <end position="99"/>
    </location>
</feature>
<accession>Q1J4Z8</accession>
<organism>
    <name type="scientific">Streptococcus pyogenes serotype M4 (strain MGAS10750)</name>
    <dbReference type="NCBI Taxonomy" id="370554"/>
    <lineage>
        <taxon>Bacteria</taxon>
        <taxon>Bacillati</taxon>
        <taxon>Bacillota</taxon>
        <taxon>Bacilli</taxon>
        <taxon>Lactobacillales</taxon>
        <taxon>Streptococcaceae</taxon>
        <taxon>Streptococcus</taxon>
    </lineage>
</organism>
<evidence type="ECO:0000255" key="1">
    <source>
        <dbReference type="HAMAP-Rule" id="MF_00274"/>
    </source>
</evidence>